<sequence length="127" mass="14465">MRHYEIVFIVHPDQSEQVPAMIDRYKSIVTARNGQIHRLEDWGRRQLAYPIQKVHKAHYVLMNIECDGEALGELEHAFKFNDAVLRHLTIKMKKAVTTPSPMMKEEKSRSLTPAAGDEGKPAEAAEA</sequence>
<dbReference type="EMBL" id="AM406670">
    <property type="protein sequence ID" value="CAL93335.1"/>
    <property type="molecule type" value="Genomic_DNA"/>
</dbReference>
<dbReference type="RefSeq" id="WP_011764453.1">
    <property type="nucleotide sequence ID" value="NC_008702.1"/>
</dbReference>
<dbReference type="SMR" id="A1K3D0"/>
<dbReference type="STRING" id="62928.azo0718"/>
<dbReference type="KEGG" id="aoa:dqs_0787"/>
<dbReference type="KEGG" id="azo:azo0718"/>
<dbReference type="eggNOG" id="COG0360">
    <property type="taxonomic scope" value="Bacteria"/>
</dbReference>
<dbReference type="HOGENOM" id="CLU_113441_6_1_4"/>
<dbReference type="OrthoDB" id="9812702at2"/>
<dbReference type="Proteomes" id="UP000002588">
    <property type="component" value="Chromosome"/>
</dbReference>
<dbReference type="GO" id="GO:0022627">
    <property type="term" value="C:cytosolic small ribosomal subunit"/>
    <property type="evidence" value="ECO:0007669"/>
    <property type="project" value="TreeGrafter"/>
</dbReference>
<dbReference type="GO" id="GO:0070181">
    <property type="term" value="F:small ribosomal subunit rRNA binding"/>
    <property type="evidence" value="ECO:0007669"/>
    <property type="project" value="TreeGrafter"/>
</dbReference>
<dbReference type="GO" id="GO:0003735">
    <property type="term" value="F:structural constituent of ribosome"/>
    <property type="evidence" value="ECO:0007669"/>
    <property type="project" value="InterPro"/>
</dbReference>
<dbReference type="GO" id="GO:0006412">
    <property type="term" value="P:translation"/>
    <property type="evidence" value="ECO:0007669"/>
    <property type="project" value="UniProtKB-UniRule"/>
</dbReference>
<dbReference type="CDD" id="cd00473">
    <property type="entry name" value="bS6"/>
    <property type="match status" value="1"/>
</dbReference>
<dbReference type="Gene3D" id="3.30.70.60">
    <property type="match status" value="1"/>
</dbReference>
<dbReference type="HAMAP" id="MF_00360">
    <property type="entry name" value="Ribosomal_bS6"/>
    <property type="match status" value="1"/>
</dbReference>
<dbReference type="InterPro" id="IPR000529">
    <property type="entry name" value="Ribosomal_bS6"/>
</dbReference>
<dbReference type="InterPro" id="IPR035980">
    <property type="entry name" value="Ribosomal_bS6_sf"/>
</dbReference>
<dbReference type="InterPro" id="IPR020814">
    <property type="entry name" value="Ribosomal_S6_plastid/chlpt"/>
</dbReference>
<dbReference type="InterPro" id="IPR014717">
    <property type="entry name" value="Transl_elong_EF1B/ribsomal_bS6"/>
</dbReference>
<dbReference type="NCBIfam" id="TIGR00166">
    <property type="entry name" value="S6"/>
    <property type="match status" value="1"/>
</dbReference>
<dbReference type="PANTHER" id="PTHR21011">
    <property type="entry name" value="MITOCHONDRIAL 28S RIBOSOMAL PROTEIN S6"/>
    <property type="match status" value="1"/>
</dbReference>
<dbReference type="PANTHER" id="PTHR21011:SF1">
    <property type="entry name" value="SMALL RIBOSOMAL SUBUNIT PROTEIN BS6M"/>
    <property type="match status" value="1"/>
</dbReference>
<dbReference type="Pfam" id="PF01250">
    <property type="entry name" value="Ribosomal_S6"/>
    <property type="match status" value="1"/>
</dbReference>
<dbReference type="SUPFAM" id="SSF54995">
    <property type="entry name" value="Ribosomal protein S6"/>
    <property type="match status" value="1"/>
</dbReference>
<gene>
    <name evidence="1" type="primary">rpsF</name>
    <name type="ordered locus">azo0718</name>
</gene>
<keyword id="KW-1185">Reference proteome</keyword>
<keyword id="KW-0687">Ribonucleoprotein</keyword>
<keyword id="KW-0689">Ribosomal protein</keyword>
<keyword id="KW-0694">RNA-binding</keyword>
<keyword id="KW-0699">rRNA-binding</keyword>
<evidence type="ECO:0000255" key="1">
    <source>
        <dbReference type="HAMAP-Rule" id="MF_00360"/>
    </source>
</evidence>
<evidence type="ECO:0000256" key="2">
    <source>
        <dbReference type="SAM" id="MobiDB-lite"/>
    </source>
</evidence>
<evidence type="ECO:0000305" key="3"/>
<name>RS6_AZOSB</name>
<organism>
    <name type="scientific">Azoarcus sp. (strain BH72)</name>
    <dbReference type="NCBI Taxonomy" id="418699"/>
    <lineage>
        <taxon>Bacteria</taxon>
        <taxon>Pseudomonadati</taxon>
        <taxon>Pseudomonadota</taxon>
        <taxon>Betaproteobacteria</taxon>
        <taxon>Rhodocyclales</taxon>
        <taxon>Zoogloeaceae</taxon>
        <taxon>Azoarcus</taxon>
    </lineage>
</organism>
<protein>
    <recommendedName>
        <fullName evidence="1">Small ribosomal subunit protein bS6</fullName>
    </recommendedName>
    <alternativeName>
        <fullName evidence="3">30S ribosomal protein S6</fullName>
    </alternativeName>
</protein>
<comment type="function">
    <text evidence="1">Binds together with bS18 to 16S ribosomal RNA.</text>
</comment>
<comment type="similarity">
    <text evidence="1">Belongs to the bacterial ribosomal protein bS6 family.</text>
</comment>
<reference key="1">
    <citation type="journal article" date="2006" name="Nat. Biotechnol.">
        <title>Complete genome of the mutualistic, N2-fixing grass endophyte Azoarcus sp. strain BH72.</title>
        <authorList>
            <person name="Krause A."/>
            <person name="Ramakumar A."/>
            <person name="Bartels D."/>
            <person name="Battistoni F."/>
            <person name="Bekel T."/>
            <person name="Boch J."/>
            <person name="Boehm M."/>
            <person name="Friedrich F."/>
            <person name="Hurek T."/>
            <person name="Krause L."/>
            <person name="Linke B."/>
            <person name="McHardy A.C."/>
            <person name="Sarkar A."/>
            <person name="Schneiker S."/>
            <person name="Syed A.A."/>
            <person name="Thauer R."/>
            <person name="Vorhoelter F.-J."/>
            <person name="Weidner S."/>
            <person name="Puehler A."/>
            <person name="Reinhold-Hurek B."/>
            <person name="Kaiser O."/>
            <person name="Goesmann A."/>
        </authorList>
    </citation>
    <scope>NUCLEOTIDE SEQUENCE [LARGE SCALE GENOMIC DNA]</scope>
    <source>
        <strain>BH72</strain>
    </source>
</reference>
<feature type="chain" id="PRO_1000005216" description="Small ribosomal subunit protein bS6">
    <location>
        <begin position="1"/>
        <end position="127"/>
    </location>
</feature>
<feature type="region of interest" description="Disordered" evidence="2">
    <location>
        <begin position="96"/>
        <end position="127"/>
    </location>
</feature>
<feature type="compositionally biased region" description="Basic and acidic residues" evidence="2">
    <location>
        <begin position="117"/>
        <end position="127"/>
    </location>
</feature>
<accession>A1K3D0</accession>
<proteinExistence type="inferred from homology"/>